<feature type="chain" id="PRO_1000134112" description="ATP synthase gamma chain">
    <location>
        <begin position="1"/>
        <end position="286"/>
    </location>
</feature>
<organism>
    <name type="scientific">Bacillus mycoides (strain KBAB4)</name>
    <name type="common">Bacillus weihenstephanensis</name>
    <dbReference type="NCBI Taxonomy" id="315730"/>
    <lineage>
        <taxon>Bacteria</taxon>
        <taxon>Bacillati</taxon>
        <taxon>Bacillota</taxon>
        <taxon>Bacilli</taxon>
        <taxon>Bacillales</taxon>
        <taxon>Bacillaceae</taxon>
        <taxon>Bacillus</taxon>
        <taxon>Bacillus cereus group</taxon>
    </lineage>
</organism>
<evidence type="ECO:0000255" key="1">
    <source>
        <dbReference type="HAMAP-Rule" id="MF_00815"/>
    </source>
</evidence>
<keyword id="KW-0066">ATP synthesis</keyword>
<keyword id="KW-1003">Cell membrane</keyword>
<keyword id="KW-0139">CF(1)</keyword>
<keyword id="KW-0375">Hydrogen ion transport</keyword>
<keyword id="KW-0406">Ion transport</keyword>
<keyword id="KW-0472">Membrane</keyword>
<keyword id="KW-0813">Transport</keyword>
<name>ATPG_BACMK</name>
<comment type="function">
    <text evidence="1">Produces ATP from ADP in the presence of a proton gradient across the membrane. The gamma chain is believed to be important in regulating ATPase activity and the flow of protons through the CF(0) complex.</text>
</comment>
<comment type="subunit">
    <text evidence="1">F-type ATPases have 2 components, CF(1) - the catalytic core - and CF(0) - the membrane proton channel. CF(1) has five subunits: alpha(3), beta(3), gamma(1), delta(1), epsilon(1). CF(0) has three main subunits: a, b and c.</text>
</comment>
<comment type="subcellular location">
    <subcellularLocation>
        <location evidence="1">Cell membrane</location>
        <topology evidence="1">Peripheral membrane protein</topology>
    </subcellularLocation>
</comment>
<comment type="similarity">
    <text evidence="1">Belongs to the ATPase gamma chain family.</text>
</comment>
<protein>
    <recommendedName>
        <fullName evidence="1">ATP synthase gamma chain</fullName>
    </recommendedName>
    <alternativeName>
        <fullName evidence="1">ATP synthase F1 sector gamma subunit</fullName>
    </alternativeName>
    <alternativeName>
        <fullName evidence="1">F-ATPase gamma subunit</fullName>
    </alternativeName>
</protein>
<accession>A9VSA4</accession>
<dbReference type="EMBL" id="CP000903">
    <property type="protein sequence ID" value="ABY46250.1"/>
    <property type="molecule type" value="Genomic_DNA"/>
</dbReference>
<dbReference type="RefSeq" id="WP_012262046.1">
    <property type="nucleotide sequence ID" value="NC_010184.1"/>
</dbReference>
<dbReference type="SMR" id="A9VSA4"/>
<dbReference type="KEGG" id="bwe:BcerKBAB4_5104"/>
<dbReference type="eggNOG" id="COG0224">
    <property type="taxonomic scope" value="Bacteria"/>
</dbReference>
<dbReference type="HOGENOM" id="CLU_050669_0_1_9"/>
<dbReference type="Proteomes" id="UP000002154">
    <property type="component" value="Chromosome"/>
</dbReference>
<dbReference type="GO" id="GO:0005886">
    <property type="term" value="C:plasma membrane"/>
    <property type="evidence" value="ECO:0007669"/>
    <property type="project" value="UniProtKB-SubCell"/>
</dbReference>
<dbReference type="GO" id="GO:0045259">
    <property type="term" value="C:proton-transporting ATP synthase complex"/>
    <property type="evidence" value="ECO:0007669"/>
    <property type="project" value="UniProtKB-KW"/>
</dbReference>
<dbReference type="GO" id="GO:0005524">
    <property type="term" value="F:ATP binding"/>
    <property type="evidence" value="ECO:0007669"/>
    <property type="project" value="UniProtKB-UniRule"/>
</dbReference>
<dbReference type="GO" id="GO:0046933">
    <property type="term" value="F:proton-transporting ATP synthase activity, rotational mechanism"/>
    <property type="evidence" value="ECO:0007669"/>
    <property type="project" value="UniProtKB-UniRule"/>
</dbReference>
<dbReference type="GO" id="GO:0042777">
    <property type="term" value="P:proton motive force-driven plasma membrane ATP synthesis"/>
    <property type="evidence" value="ECO:0007669"/>
    <property type="project" value="UniProtKB-UniRule"/>
</dbReference>
<dbReference type="CDD" id="cd12151">
    <property type="entry name" value="F1-ATPase_gamma"/>
    <property type="match status" value="1"/>
</dbReference>
<dbReference type="FunFam" id="3.40.1380.10:FF:000002">
    <property type="entry name" value="ATP synthase gamma chain"/>
    <property type="match status" value="1"/>
</dbReference>
<dbReference type="Gene3D" id="3.40.1380.10">
    <property type="match status" value="1"/>
</dbReference>
<dbReference type="Gene3D" id="1.10.287.80">
    <property type="entry name" value="ATP synthase, gamma subunit, helix hairpin domain"/>
    <property type="match status" value="1"/>
</dbReference>
<dbReference type="HAMAP" id="MF_00815">
    <property type="entry name" value="ATP_synth_gamma_bact"/>
    <property type="match status" value="1"/>
</dbReference>
<dbReference type="InterPro" id="IPR035968">
    <property type="entry name" value="ATP_synth_F1_ATPase_gsu"/>
</dbReference>
<dbReference type="InterPro" id="IPR000131">
    <property type="entry name" value="ATP_synth_F1_gsu"/>
</dbReference>
<dbReference type="NCBIfam" id="TIGR01146">
    <property type="entry name" value="ATPsyn_F1gamma"/>
    <property type="match status" value="1"/>
</dbReference>
<dbReference type="PANTHER" id="PTHR11693">
    <property type="entry name" value="ATP SYNTHASE GAMMA CHAIN"/>
    <property type="match status" value="1"/>
</dbReference>
<dbReference type="PANTHER" id="PTHR11693:SF22">
    <property type="entry name" value="ATP SYNTHASE SUBUNIT GAMMA, MITOCHONDRIAL"/>
    <property type="match status" value="1"/>
</dbReference>
<dbReference type="Pfam" id="PF00231">
    <property type="entry name" value="ATP-synt"/>
    <property type="match status" value="1"/>
</dbReference>
<dbReference type="PRINTS" id="PR00126">
    <property type="entry name" value="ATPASEGAMMA"/>
</dbReference>
<dbReference type="SUPFAM" id="SSF52943">
    <property type="entry name" value="ATP synthase (F1-ATPase), gamma subunit"/>
    <property type="match status" value="1"/>
</dbReference>
<gene>
    <name evidence="1" type="primary">atpG</name>
    <name type="ordered locus">BcerKBAB4_5104</name>
</gene>
<proteinExistence type="inferred from homology"/>
<sequence>MASLRDIKAKINSTKKTSQITKAMEMVSASKLNRAEQNAKSFVPYMEKIQEVVASIAQGSKGINHPMLNSRPVKRTGYIVITSDRGLAGGYNSNVLRTVSNVIRERHNMDSNQYSIIVLGRLGRDYLKRRGFNIIDEVVGLSDHPSFTDIKDIASRAIAMFADGAYDELYIYYNHYVSKISQEVTENKILPLTDVASDKPTTAYEFEPSEEEILKVLLPQYAESLVYGALLDGKASEHAARMTAMKSATDNAMEVIDSLTLSFNRARQAAITQEITEIVGGVAALE</sequence>
<reference key="1">
    <citation type="journal article" date="2008" name="Chem. Biol. Interact.">
        <title>Extending the Bacillus cereus group genomics to putative food-borne pathogens of different toxicity.</title>
        <authorList>
            <person name="Lapidus A."/>
            <person name="Goltsman E."/>
            <person name="Auger S."/>
            <person name="Galleron N."/>
            <person name="Segurens B."/>
            <person name="Dossat C."/>
            <person name="Land M.L."/>
            <person name="Broussolle V."/>
            <person name="Brillard J."/>
            <person name="Guinebretiere M.-H."/>
            <person name="Sanchis V."/>
            <person name="Nguen-the C."/>
            <person name="Lereclus D."/>
            <person name="Richardson P."/>
            <person name="Wincker P."/>
            <person name="Weissenbach J."/>
            <person name="Ehrlich S.D."/>
            <person name="Sorokin A."/>
        </authorList>
    </citation>
    <scope>NUCLEOTIDE SEQUENCE [LARGE SCALE GENOMIC DNA]</scope>
    <source>
        <strain>KBAB4</strain>
    </source>
</reference>